<proteinExistence type="predicted"/>
<keyword id="KW-0614">Plasmid</keyword>
<dbReference type="EMBL" id="AP001918">
    <property type="protein sequence ID" value="BAA97895.1"/>
    <property type="molecule type" value="Genomic_DNA"/>
</dbReference>
<dbReference type="RefSeq" id="NP_061404.1">
    <property type="nucleotide sequence ID" value="NC_002483.1"/>
</dbReference>
<gene>
    <name type="primary">yuaN</name>
    <name type="synonym">ycbA</name>
    <name type="ordered locus">ECOK12F025</name>
</gene>
<geneLocation type="plasmid">
    <name>F</name>
</geneLocation>
<accession>Q9JMS6</accession>
<name>YUAN_ECOLI</name>
<protein>
    <recommendedName>
        <fullName>Uncharacterized protein YuaN</fullName>
    </recommendedName>
</protein>
<organism>
    <name type="scientific">Escherichia coli (strain K12)</name>
    <dbReference type="NCBI Taxonomy" id="83333"/>
    <lineage>
        <taxon>Bacteria</taxon>
        <taxon>Pseudomonadati</taxon>
        <taxon>Pseudomonadota</taxon>
        <taxon>Gammaproteobacteria</taxon>
        <taxon>Enterobacterales</taxon>
        <taxon>Enterobacteriaceae</taxon>
        <taxon>Escherichia</taxon>
    </lineage>
</organism>
<reference key="1">
    <citation type="submission" date="2000-04" db="EMBL/GenBank/DDBJ databases">
        <title>Complete nucleotide sequence of the F plasmid: its implications for organization and diversification of plasmid genomes.</title>
        <authorList>
            <person name="Shimizu H."/>
            <person name="Saitoh Y."/>
            <person name="Suda Y."/>
            <person name="Uehara K."/>
            <person name="Sampei G."/>
            <person name="Mizobuchi K."/>
        </authorList>
    </citation>
    <scope>NUCLEOTIDE SEQUENCE [LARGE SCALE GENOMIC DNA]</scope>
    <source>
        <strain>K12 / CR63</strain>
    </source>
</reference>
<sequence>MVRYHGEFTYYVYQQSGRYFFCKKLTKKRDTSNCNHLHIIRELSFNEDELELIDFSTDGLDANDKEIIRGMIDELKK</sequence>
<feature type="chain" id="PRO_0000267222" description="Uncharacterized protein YuaN">
    <location>
        <begin position="1"/>
        <end position="77"/>
    </location>
</feature>